<keyword id="KW-0963">Cytoplasm</keyword>
<keyword id="KW-0269">Exonuclease</keyword>
<keyword id="KW-0378">Hydrolase</keyword>
<keyword id="KW-0540">Nuclease</keyword>
<keyword id="KW-1185">Reference proteome</keyword>
<dbReference type="EC" id="3.1.11.6" evidence="1"/>
<dbReference type="EMBL" id="CP000031">
    <property type="protein sequence ID" value="AAV94632.1"/>
    <property type="molecule type" value="Genomic_DNA"/>
</dbReference>
<dbReference type="SMR" id="Q5LTR9"/>
<dbReference type="STRING" id="246200.SPO1344"/>
<dbReference type="PaxDb" id="246200-SPO1344"/>
<dbReference type="KEGG" id="sil:SPO1344"/>
<dbReference type="eggNOG" id="COG1570">
    <property type="taxonomic scope" value="Bacteria"/>
</dbReference>
<dbReference type="HOGENOM" id="CLU_023625_3_1_5"/>
<dbReference type="Proteomes" id="UP000001023">
    <property type="component" value="Chromosome"/>
</dbReference>
<dbReference type="GO" id="GO:0005737">
    <property type="term" value="C:cytoplasm"/>
    <property type="evidence" value="ECO:0007669"/>
    <property type="project" value="UniProtKB-SubCell"/>
</dbReference>
<dbReference type="GO" id="GO:0009318">
    <property type="term" value="C:exodeoxyribonuclease VII complex"/>
    <property type="evidence" value="ECO:0007669"/>
    <property type="project" value="InterPro"/>
</dbReference>
<dbReference type="GO" id="GO:0008855">
    <property type="term" value="F:exodeoxyribonuclease VII activity"/>
    <property type="evidence" value="ECO:0007669"/>
    <property type="project" value="UniProtKB-UniRule"/>
</dbReference>
<dbReference type="GO" id="GO:0003676">
    <property type="term" value="F:nucleic acid binding"/>
    <property type="evidence" value="ECO:0007669"/>
    <property type="project" value="InterPro"/>
</dbReference>
<dbReference type="GO" id="GO:0006308">
    <property type="term" value="P:DNA catabolic process"/>
    <property type="evidence" value="ECO:0007669"/>
    <property type="project" value="UniProtKB-UniRule"/>
</dbReference>
<dbReference type="CDD" id="cd04489">
    <property type="entry name" value="ExoVII_LU_OBF"/>
    <property type="match status" value="1"/>
</dbReference>
<dbReference type="HAMAP" id="MF_00378">
    <property type="entry name" value="Exonuc_7_L"/>
    <property type="match status" value="1"/>
</dbReference>
<dbReference type="InterPro" id="IPR003753">
    <property type="entry name" value="Exonuc_VII_L"/>
</dbReference>
<dbReference type="InterPro" id="IPR020579">
    <property type="entry name" value="Exonuc_VII_lsu_C"/>
</dbReference>
<dbReference type="InterPro" id="IPR025824">
    <property type="entry name" value="OB-fold_nuc-bd_dom"/>
</dbReference>
<dbReference type="NCBIfam" id="TIGR00237">
    <property type="entry name" value="xseA"/>
    <property type="match status" value="1"/>
</dbReference>
<dbReference type="PANTHER" id="PTHR30008">
    <property type="entry name" value="EXODEOXYRIBONUCLEASE 7 LARGE SUBUNIT"/>
    <property type="match status" value="1"/>
</dbReference>
<dbReference type="PANTHER" id="PTHR30008:SF0">
    <property type="entry name" value="EXODEOXYRIBONUCLEASE 7 LARGE SUBUNIT"/>
    <property type="match status" value="1"/>
</dbReference>
<dbReference type="Pfam" id="PF02601">
    <property type="entry name" value="Exonuc_VII_L"/>
    <property type="match status" value="1"/>
</dbReference>
<dbReference type="Pfam" id="PF13742">
    <property type="entry name" value="tRNA_anti_2"/>
    <property type="match status" value="1"/>
</dbReference>
<sequence length="482" mass="52669">MPEFTVTEISGEVKRTLEGSFGRIRVRGEVGRVFQARSGHLYYDIKDDRNVLACTTWKGQVASLSVVPEEGLEVVVTGRLTAFGAQSKYNLNVDEVAVAGQGALMALLEKRKKQLEAEGLFAPERKRPLPYLPQIIGVITSPQGAVIRDILHRLRDRFPRKVLIWPVAVQGANCAPEVARAIEGFNMFSPGGALPRPDLLIVARGGGSIEDLWGFNEEIVARAAAASQIPLISAVGHETDTTLIDFVSDRRAPTPTAAAEMAVPVRLELLAWTGEQGARLSRAASDAVQRRAQRLRDLSRALPRPDSLLDTPRQRLDRAAERLPAALTQGVQRRRLRLAELSAPLRPASLRALVSARRDHLAHLGSRLSPRALEREIAAQGERLTRLSDRLNSAQTTRIERLRQRLESADRLRETLGYKATLARGYAVVRDDQGALLTTRAQAAKAAALQIEFADGTLDTGGAPAKPASKPKQKPPEQGSLF</sequence>
<name>EX7L_RUEPO</name>
<protein>
    <recommendedName>
        <fullName evidence="1">Exodeoxyribonuclease 7 large subunit</fullName>
        <ecNumber evidence="1">3.1.11.6</ecNumber>
    </recommendedName>
    <alternativeName>
        <fullName evidence="1">Exodeoxyribonuclease VII large subunit</fullName>
        <shortName evidence="1">Exonuclease VII large subunit</shortName>
    </alternativeName>
</protein>
<proteinExistence type="inferred from homology"/>
<reference key="1">
    <citation type="journal article" date="2004" name="Nature">
        <title>Genome sequence of Silicibacter pomeroyi reveals adaptations to the marine environment.</title>
        <authorList>
            <person name="Moran M.A."/>
            <person name="Buchan A."/>
            <person name="Gonzalez J.M."/>
            <person name="Heidelberg J.F."/>
            <person name="Whitman W.B."/>
            <person name="Kiene R.P."/>
            <person name="Henriksen J.R."/>
            <person name="King G.M."/>
            <person name="Belas R."/>
            <person name="Fuqua C."/>
            <person name="Brinkac L.M."/>
            <person name="Lewis M."/>
            <person name="Johri S."/>
            <person name="Weaver B."/>
            <person name="Pai G."/>
            <person name="Eisen J.A."/>
            <person name="Rahe E."/>
            <person name="Sheldon W.M."/>
            <person name="Ye W."/>
            <person name="Miller T.R."/>
            <person name="Carlton J."/>
            <person name="Rasko D.A."/>
            <person name="Paulsen I.T."/>
            <person name="Ren Q."/>
            <person name="Daugherty S.C."/>
            <person name="DeBoy R.T."/>
            <person name="Dodson R.J."/>
            <person name="Durkin A.S."/>
            <person name="Madupu R."/>
            <person name="Nelson W.C."/>
            <person name="Sullivan S.A."/>
            <person name="Rosovitz M.J."/>
            <person name="Haft D.H."/>
            <person name="Selengut J."/>
            <person name="Ward N."/>
        </authorList>
    </citation>
    <scope>NUCLEOTIDE SEQUENCE [LARGE SCALE GENOMIC DNA]</scope>
    <source>
        <strain>ATCC 700808 / DSM 15171 / DSS-3</strain>
    </source>
</reference>
<reference key="2">
    <citation type="journal article" date="2014" name="Stand. Genomic Sci.">
        <title>An updated genome annotation for the model marine bacterium Ruegeria pomeroyi DSS-3.</title>
        <authorList>
            <person name="Rivers A.R."/>
            <person name="Smith C.B."/>
            <person name="Moran M.A."/>
        </authorList>
    </citation>
    <scope>GENOME REANNOTATION</scope>
    <source>
        <strain>ATCC 700808 / DSM 15171 / DSS-3</strain>
    </source>
</reference>
<accession>Q5LTR9</accession>
<feature type="chain" id="PRO_0000273692" description="Exodeoxyribonuclease 7 large subunit">
    <location>
        <begin position="1"/>
        <end position="482"/>
    </location>
</feature>
<feature type="region of interest" description="Disordered" evidence="2">
    <location>
        <begin position="457"/>
        <end position="482"/>
    </location>
</feature>
<evidence type="ECO:0000255" key="1">
    <source>
        <dbReference type="HAMAP-Rule" id="MF_00378"/>
    </source>
</evidence>
<evidence type="ECO:0000256" key="2">
    <source>
        <dbReference type="SAM" id="MobiDB-lite"/>
    </source>
</evidence>
<gene>
    <name evidence="1" type="primary">xseA</name>
    <name type="ordered locus">SPO1344</name>
</gene>
<comment type="function">
    <text evidence="1">Bidirectionally degrades single-stranded DNA into large acid-insoluble oligonucleotides, which are then degraded further into small acid-soluble oligonucleotides.</text>
</comment>
<comment type="catalytic activity">
    <reaction evidence="1">
        <text>Exonucleolytic cleavage in either 5'- to 3'- or 3'- to 5'-direction to yield nucleoside 5'-phosphates.</text>
        <dbReference type="EC" id="3.1.11.6"/>
    </reaction>
</comment>
<comment type="subunit">
    <text evidence="1">Heterooligomer composed of large and small subunits.</text>
</comment>
<comment type="subcellular location">
    <subcellularLocation>
        <location evidence="1">Cytoplasm</location>
    </subcellularLocation>
</comment>
<comment type="similarity">
    <text evidence="1">Belongs to the XseA family.</text>
</comment>
<organism>
    <name type="scientific">Ruegeria pomeroyi (strain ATCC 700808 / DSM 15171 / DSS-3)</name>
    <name type="common">Silicibacter pomeroyi</name>
    <dbReference type="NCBI Taxonomy" id="246200"/>
    <lineage>
        <taxon>Bacteria</taxon>
        <taxon>Pseudomonadati</taxon>
        <taxon>Pseudomonadota</taxon>
        <taxon>Alphaproteobacteria</taxon>
        <taxon>Rhodobacterales</taxon>
        <taxon>Roseobacteraceae</taxon>
        <taxon>Ruegeria</taxon>
    </lineage>
</organism>